<dbReference type="EC" id="2.7.7.56" evidence="1"/>
<dbReference type="EMBL" id="CP001074">
    <property type="protein sequence ID" value="ACE89396.1"/>
    <property type="molecule type" value="Genomic_DNA"/>
</dbReference>
<dbReference type="SMR" id="B3PZA2"/>
<dbReference type="KEGG" id="rec:RHECIAT_CH0000402"/>
<dbReference type="eggNOG" id="COG0689">
    <property type="taxonomic scope" value="Bacteria"/>
</dbReference>
<dbReference type="HOGENOM" id="CLU_050858_0_0_5"/>
<dbReference type="Proteomes" id="UP000008817">
    <property type="component" value="Chromosome"/>
</dbReference>
<dbReference type="GO" id="GO:0000175">
    <property type="term" value="F:3'-5'-RNA exonuclease activity"/>
    <property type="evidence" value="ECO:0007669"/>
    <property type="project" value="UniProtKB-UniRule"/>
</dbReference>
<dbReference type="GO" id="GO:0000049">
    <property type="term" value="F:tRNA binding"/>
    <property type="evidence" value="ECO:0007669"/>
    <property type="project" value="UniProtKB-UniRule"/>
</dbReference>
<dbReference type="GO" id="GO:0009022">
    <property type="term" value="F:tRNA nucleotidyltransferase activity"/>
    <property type="evidence" value="ECO:0007669"/>
    <property type="project" value="UniProtKB-UniRule"/>
</dbReference>
<dbReference type="GO" id="GO:0016075">
    <property type="term" value="P:rRNA catabolic process"/>
    <property type="evidence" value="ECO:0007669"/>
    <property type="project" value="UniProtKB-UniRule"/>
</dbReference>
<dbReference type="GO" id="GO:0006364">
    <property type="term" value="P:rRNA processing"/>
    <property type="evidence" value="ECO:0007669"/>
    <property type="project" value="UniProtKB-KW"/>
</dbReference>
<dbReference type="GO" id="GO:0008033">
    <property type="term" value="P:tRNA processing"/>
    <property type="evidence" value="ECO:0007669"/>
    <property type="project" value="UniProtKB-UniRule"/>
</dbReference>
<dbReference type="CDD" id="cd11362">
    <property type="entry name" value="RNase_PH_bact"/>
    <property type="match status" value="1"/>
</dbReference>
<dbReference type="FunFam" id="3.30.230.70:FF:000003">
    <property type="entry name" value="Ribonuclease PH"/>
    <property type="match status" value="1"/>
</dbReference>
<dbReference type="Gene3D" id="3.30.230.70">
    <property type="entry name" value="GHMP Kinase, N-terminal domain"/>
    <property type="match status" value="1"/>
</dbReference>
<dbReference type="HAMAP" id="MF_00564">
    <property type="entry name" value="RNase_PH"/>
    <property type="match status" value="1"/>
</dbReference>
<dbReference type="InterPro" id="IPR001247">
    <property type="entry name" value="ExoRNase_PH_dom1"/>
</dbReference>
<dbReference type="InterPro" id="IPR015847">
    <property type="entry name" value="ExoRNase_PH_dom2"/>
</dbReference>
<dbReference type="InterPro" id="IPR036345">
    <property type="entry name" value="ExoRNase_PH_dom2_sf"/>
</dbReference>
<dbReference type="InterPro" id="IPR027408">
    <property type="entry name" value="PNPase/RNase_PH_dom_sf"/>
</dbReference>
<dbReference type="InterPro" id="IPR020568">
    <property type="entry name" value="Ribosomal_Su5_D2-typ_SF"/>
</dbReference>
<dbReference type="InterPro" id="IPR050080">
    <property type="entry name" value="RNase_PH"/>
</dbReference>
<dbReference type="InterPro" id="IPR002381">
    <property type="entry name" value="RNase_PH_bac-type"/>
</dbReference>
<dbReference type="InterPro" id="IPR018336">
    <property type="entry name" value="RNase_PH_CS"/>
</dbReference>
<dbReference type="NCBIfam" id="TIGR01966">
    <property type="entry name" value="RNasePH"/>
    <property type="match status" value="1"/>
</dbReference>
<dbReference type="PANTHER" id="PTHR11953">
    <property type="entry name" value="EXOSOME COMPLEX COMPONENT"/>
    <property type="match status" value="1"/>
</dbReference>
<dbReference type="PANTHER" id="PTHR11953:SF0">
    <property type="entry name" value="EXOSOME COMPLEX COMPONENT RRP41"/>
    <property type="match status" value="1"/>
</dbReference>
<dbReference type="Pfam" id="PF01138">
    <property type="entry name" value="RNase_PH"/>
    <property type="match status" value="1"/>
</dbReference>
<dbReference type="Pfam" id="PF03725">
    <property type="entry name" value="RNase_PH_C"/>
    <property type="match status" value="1"/>
</dbReference>
<dbReference type="SUPFAM" id="SSF55666">
    <property type="entry name" value="Ribonuclease PH domain 2-like"/>
    <property type="match status" value="1"/>
</dbReference>
<dbReference type="SUPFAM" id="SSF54211">
    <property type="entry name" value="Ribosomal protein S5 domain 2-like"/>
    <property type="match status" value="1"/>
</dbReference>
<dbReference type="PROSITE" id="PS01277">
    <property type="entry name" value="RIBONUCLEASE_PH"/>
    <property type="match status" value="1"/>
</dbReference>
<name>RNPH_RHIE6</name>
<organism>
    <name type="scientific">Rhizobium etli (strain CIAT 652)</name>
    <dbReference type="NCBI Taxonomy" id="491916"/>
    <lineage>
        <taxon>Bacteria</taxon>
        <taxon>Pseudomonadati</taxon>
        <taxon>Pseudomonadota</taxon>
        <taxon>Alphaproteobacteria</taxon>
        <taxon>Hyphomicrobiales</taxon>
        <taxon>Rhizobiaceae</taxon>
        <taxon>Rhizobium/Agrobacterium group</taxon>
        <taxon>Rhizobium</taxon>
    </lineage>
</organism>
<accession>B3PZA2</accession>
<sequence length="239" mass="25946">MRPSGRKTDQMRKVSFERNFSKHAEGSCLVKFGDTHVLCTASLEDKTPPWLRNTGKGWVTAEYGMLPRATGERMKREAAAGKQGGRTQEIQRLIGRSLRAVVDLQALGERQITLDCDVIQADGGTRTASITGGWIALYDCLKWMESRNMIKVDRVLKDHVAAISCGVFASQAVIDLDYLEDSSAETDANFVMTGAGGIVEIQGTAEGTPFTEEEFTSLMGLAKNGIGELVALQKQAIAG</sequence>
<gene>
    <name evidence="1" type="primary">rph</name>
    <name type="ordered locus">RHECIAT_CH0000402</name>
</gene>
<comment type="function">
    <text evidence="1">Phosphorolytic 3'-5' exoribonuclease that plays an important role in tRNA 3'-end maturation. Removes nucleotide residues following the 3'-CCA terminus of tRNAs; can also add nucleotides to the ends of RNA molecules by using nucleoside diphosphates as substrates, but this may not be physiologically important. Probably plays a role in initiation of 16S rRNA degradation (leading to ribosome degradation) during starvation.</text>
</comment>
<comment type="catalytic activity">
    <reaction evidence="1">
        <text>tRNA(n+1) + phosphate = tRNA(n) + a ribonucleoside 5'-diphosphate</text>
        <dbReference type="Rhea" id="RHEA:10628"/>
        <dbReference type="Rhea" id="RHEA-COMP:17343"/>
        <dbReference type="Rhea" id="RHEA-COMP:17344"/>
        <dbReference type="ChEBI" id="CHEBI:43474"/>
        <dbReference type="ChEBI" id="CHEBI:57930"/>
        <dbReference type="ChEBI" id="CHEBI:173114"/>
        <dbReference type="EC" id="2.7.7.56"/>
    </reaction>
</comment>
<comment type="subunit">
    <text evidence="1">Homohexameric ring arranged as a trimer of dimers.</text>
</comment>
<comment type="similarity">
    <text evidence="1">Belongs to the RNase PH family.</text>
</comment>
<keyword id="KW-0548">Nucleotidyltransferase</keyword>
<keyword id="KW-0694">RNA-binding</keyword>
<keyword id="KW-0698">rRNA processing</keyword>
<keyword id="KW-0808">Transferase</keyword>
<keyword id="KW-0819">tRNA processing</keyword>
<keyword id="KW-0820">tRNA-binding</keyword>
<protein>
    <recommendedName>
        <fullName evidence="1">Ribonuclease PH</fullName>
        <shortName evidence="1">RNase PH</shortName>
        <ecNumber evidence="1">2.7.7.56</ecNumber>
    </recommendedName>
    <alternativeName>
        <fullName evidence="1">tRNA nucleotidyltransferase</fullName>
    </alternativeName>
</protein>
<evidence type="ECO:0000255" key="1">
    <source>
        <dbReference type="HAMAP-Rule" id="MF_00564"/>
    </source>
</evidence>
<feature type="chain" id="PRO_1000129362" description="Ribonuclease PH">
    <location>
        <begin position="1"/>
        <end position="239"/>
    </location>
</feature>
<feature type="binding site" evidence="1">
    <location>
        <position position="86"/>
    </location>
    <ligand>
        <name>phosphate</name>
        <dbReference type="ChEBI" id="CHEBI:43474"/>
        <note>substrate</note>
    </ligand>
</feature>
<feature type="binding site" evidence="1">
    <location>
        <begin position="124"/>
        <end position="126"/>
    </location>
    <ligand>
        <name>phosphate</name>
        <dbReference type="ChEBI" id="CHEBI:43474"/>
        <note>substrate</note>
    </ligand>
</feature>
<reference key="1">
    <citation type="journal article" date="2010" name="Appl. Environ. Microbiol.">
        <title>Conserved symbiotic plasmid DNA sequences in the multireplicon pangenomic structure of Rhizobium etli.</title>
        <authorList>
            <person name="Gonzalez V."/>
            <person name="Acosta J.L."/>
            <person name="Santamaria R.I."/>
            <person name="Bustos P."/>
            <person name="Fernandez J.L."/>
            <person name="Hernandez Gonzalez I.L."/>
            <person name="Diaz R."/>
            <person name="Flores M."/>
            <person name="Palacios R."/>
            <person name="Mora J."/>
            <person name="Davila G."/>
        </authorList>
    </citation>
    <scope>NUCLEOTIDE SEQUENCE [LARGE SCALE GENOMIC DNA]</scope>
    <source>
        <strain>CIAT 652</strain>
    </source>
</reference>
<proteinExistence type="inferred from homology"/>